<dbReference type="EC" id="2.7.1.148" evidence="1"/>
<dbReference type="EMBL" id="CP000133">
    <property type="protein sequence ID" value="ABC89684.1"/>
    <property type="molecule type" value="Genomic_DNA"/>
</dbReference>
<dbReference type="RefSeq" id="WP_011424221.1">
    <property type="nucleotide sequence ID" value="NC_007761.1"/>
</dbReference>
<dbReference type="SMR" id="Q2KBV2"/>
<dbReference type="KEGG" id="ret:RHE_CH00873"/>
<dbReference type="eggNOG" id="COG1947">
    <property type="taxonomic scope" value="Bacteria"/>
</dbReference>
<dbReference type="HOGENOM" id="CLU_053057_1_0_5"/>
<dbReference type="OrthoDB" id="9809438at2"/>
<dbReference type="UniPathway" id="UPA00056">
    <property type="reaction ID" value="UER00094"/>
</dbReference>
<dbReference type="Proteomes" id="UP000001936">
    <property type="component" value="Chromosome"/>
</dbReference>
<dbReference type="GO" id="GO:0050515">
    <property type="term" value="F:4-(cytidine 5'-diphospho)-2-C-methyl-D-erythritol kinase activity"/>
    <property type="evidence" value="ECO:0007669"/>
    <property type="project" value="UniProtKB-UniRule"/>
</dbReference>
<dbReference type="GO" id="GO:0005524">
    <property type="term" value="F:ATP binding"/>
    <property type="evidence" value="ECO:0007669"/>
    <property type="project" value="UniProtKB-UniRule"/>
</dbReference>
<dbReference type="GO" id="GO:0019288">
    <property type="term" value="P:isopentenyl diphosphate biosynthetic process, methylerythritol 4-phosphate pathway"/>
    <property type="evidence" value="ECO:0007669"/>
    <property type="project" value="UniProtKB-UniRule"/>
</dbReference>
<dbReference type="GO" id="GO:0016114">
    <property type="term" value="P:terpenoid biosynthetic process"/>
    <property type="evidence" value="ECO:0007669"/>
    <property type="project" value="InterPro"/>
</dbReference>
<dbReference type="Gene3D" id="3.30.230.10">
    <property type="match status" value="1"/>
</dbReference>
<dbReference type="Gene3D" id="3.30.70.890">
    <property type="entry name" value="GHMP kinase, C-terminal domain"/>
    <property type="match status" value="1"/>
</dbReference>
<dbReference type="HAMAP" id="MF_00061">
    <property type="entry name" value="IspE"/>
    <property type="match status" value="1"/>
</dbReference>
<dbReference type="InterPro" id="IPR013750">
    <property type="entry name" value="GHMP_kinase_C_dom"/>
</dbReference>
<dbReference type="InterPro" id="IPR036554">
    <property type="entry name" value="GHMP_kinase_C_sf"/>
</dbReference>
<dbReference type="InterPro" id="IPR006204">
    <property type="entry name" value="GHMP_kinase_N_dom"/>
</dbReference>
<dbReference type="InterPro" id="IPR004424">
    <property type="entry name" value="IspE"/>
</dbReference>
<dbReference type="InterPro" id="IPR020568">
    <property type="entry name" value="Ribosomal_Su5_D2-typ_SF"/>
</dbReference>
<dbReference type="InterPro" id="IPR014721">
    <property type="entry name" value="Ribsml_uS5_D2-typ_fold_subgr"/>
</dbReference>
<dbReference type="NCBIfam" id="TIGR00154">
    <property type="entry name" value="ispE"/>
    <property type="match status" value="1"/>
</dbReference>
<dbReference type="NCBIfam" id="NF011202">
    <property type="entry name" value="PRK14608.1"/>
    <property type="match status" value="1"/>
</dbReference>
<dbReference type="PANTHER" id="PTHR43527">
    <property type="entry name" value="4-DIPHOSPHOCYTIDYL-2-C-METHYL-D-ERYTHRITOL KINASE, CHLOROPLASTIC"/>
    <property type="match status" value="1"/>
</dbReference>
<dbReference type="PANTHER" id="PTHR43527:SF2">
    <property type="entry name" value="4-DIPHOSPHOCYTIDYL-2-C-METHYL-D-ERYTHRITOL KINASE, CHLOROPLASTIC"/>
    <property type="match status" value="1"/>
</dbReference>
<dbReference type="Pfam" id="PF08544">
    <property type="entry name" value="GHMP_kinases_C"/>
    <property type="match status" value="1"/>
</dbReference>
<dbReference type="Pfam" id="PF00288">
    <property type="entry name" value="GHMP_kinases_N"/>
    <property type="match status" value="1"/>
</dbReference>
<dbReference type="PIRSF" id="PIRSF010376">
    <property type="entry name" value="IspE"/>
    <property type="match status" value="1"/>
</dbReference>
<dbReference type="SUPFAM" id="SSF55060">
    <property type="entry name" value="GHMP Kinase, C-terminal domain"/>
    <property type="match status" value="1"/>
</dbReference>
<dbReference type="SUPFAM" id="SSF54211">
    <property type="entry name" value="Ribosomal protein S5 domain 2-like"/>
    <property type="match status" value="1"/>
</dbReference>
<keyword id="KW-0067">ATP-binding</keyword>
<keyword id="KW-0414">Isoprene biosynthesis</keyword>
<keyword id="KW-0418">Kinase</keyword>
<keyword id="KW-0547">Nucleotide-binding</keyword>
<keyword id="KW-1185">Reference proteome</keyword>
<keyword id="KW-0808">Transferase</keyword>
<proteinExistence type="inferred from homology"/>
<accession>Q2KBV2</accession>
<gene>
    <name evidence="1" type="primary">ispE</name>
    <name type="ordered locus">RHE_CH00873</name>
</gene>
<protein>
    <recommendedName>
        <fullName evidence="1">4-diphosphocytidyl-2-C-methyl-D-erythritol kinase</fullName>
        <shortName evidence="1">CMK</shortName>
        <ecNumber evidence="1">2.7.1.148</ecNumber>
    </recommendedName>
    <alternativeName>
        <fullName evidence="1">4-(cytidine-5'-diphospho)-2-C-methyl-D-erythritol kinase</fullName>
    </alternativeName>
</protein>
<reference key="1">
    <citation type="journal article" date="2006" name="Proc. Natl. Acad. Sci. U.S.A.">
        <title>The partitioned Rhizobium etli genome: genetic and metabolic redundancy in seven interacting replicons.</title>
        <authorList>
            <person name="Gonzalez V."/>
            <person name="Santamaria R.I."/>
            <person name="Bustos P."/>
            <person name="Hernandez-Gonzalez I."/>
            <person name="Medrano-Soto A."/>
            <person name="Moreno-Hagelsieb G."/>
            <person name="Janga S.C."/>
            <person name="Ramirez M.A."/>
            <person name="Jimenez-Jacinto V."/>
            <person name="Collado-Vides J."/>
            <person name="Davila G."/>
        </authorList>
    </citation>
    <scope>NUCLEOTIDE SEQUENCE [LARGE SCALE GENOMIC DNA]</scope>
    <source>
        <strain>ATCC 51251 / DSM 11541 / JCM 21823 / NBRC 15573 / CFN 42</strain>
    </source>
</reference>
<name>ISPE_RHIEC</name>
<comment type="function">
    <text evidence="1">Catalyzes the phosphorylation of the position 2 hydroxy group of 4-diphosphocytidyl-2C-methyl-D-erythritol.</text>
</comment>
<comment type="catalytic activity">
    <reaction evidence="1">
        <text>4-CDP-2-C-methyl-D-erythritol + ATP = 4-CDP-2-C-methyl-D-erythritol 2-phosphate + ADP + H(+)</text>
        <dbReference type="Rhea" id="RHEA:18437"/>
        <dbReference type="ChEBI" id="CHEBI:15378"/>
        <dbReference type="ChEBI" id="CHEBI:30616"/>
        <dbReference type="ChEBI" id="CHEBI:57823"/>
        <dbReference type="ChEBI" id="CHEBI:57919"/>
        <dbReference type="ChEBI" id="CHEBI:456216"/>
        <dbReference type="EC" id="2.7.1.148"/>
    </reaction>
</comment>
<comment type="pathway">
    <text evidence="1">Isoprenoid biosynthesis; isopentenyl diphosphate biosynthesis via DXP pathway; isopentenyl diphosphate from 1-deoxy-D-xylulose 5-phosphate: step 3/6.</text>
</comment>
<comment type="similarity">
    <text evidence="1">Belongs to the GHMP kinase family. IspE subfamily.</text>
</comment>
<feature type="chain" id="PRO_0000335745" description="4-diphosphocytidyl-2-C-methyl-D-erythritol kinase">
    <location>
        <begin position="1"/>
        <end position="294"/>
    </location>
</feature>
<feature type="active site" evidence="1">
    <location>
        <position position="19"/>
    </location>
</feature>
<feature type="active site" evidence="1">
    <location>
        <position position="148"/>
    </location>
</feature>
<feature type="binding site" evidence="1">
    <location>
        <begin position="106"/>
        <end position="116"/>
    </location>
    <ligand>
        <name>ATP</name>
        <dbReference type="ChEBI" id="CHEBI:30616"/>
    </ligand>
</feature>
<organism>
    <name type="scientific">Rhizobium etli (strain ATCC 51251 / DSM 11541 / JCM 21823 / NBRC 15573 / CFN 42)</name>
    <dbReference type="NCBI Taxonomy" id="347834"/>
    <lineage>
        <taxon>Bacteria</taxon>
        <taxon>Pseudomonadati</taxon>
        <taxon>Pseudomonadota</taxon>
        <taxon>Alphaproteobacteria</taxon>
        <taxon>Hyphomicrobiales</taxon>
        <taxon>Rhizobiaceae</taxon>
        <taxon>Rhizobium/Agrobacterium group</taxon>
        <taxon>Rhizobium</taxon>
    </lineage>
</organism>
<sequence length="294" mass="30623">MPEQGLADAFGVTEEARAKINLALHVTGQRPDGYHLLDMLVTFADCGDRLGFLPAQADAFTLSGRFGETLAGDGGANLVIRARDLLREAVGTLAFPVHIHLQKNLPVASGIGGGSADAAAALRGLMRLWGTRLPVAALATLALKLGADVPMCLESRPLIARGIGEEIEAVPDLPAFAMVLANPLKGVSTPEVFRRLKAKNNPPLTLAQTAGWLATIGAARNDLEPPAREAVPEIAAISAMLQAEGALLARMSGSGATCFGIFADMAAARDAAAALHEARPDWYFQATETVSGGM</sequence>
<evidence type="ECO:0000255" key="1">
    <source>
        <dbReference type="HAMAP-Rule" id="MF_00061"/>
    </source>
</evidence>